<comment type="function">
    <text evidence="1">Probable ion channel inhibitor.</text>
</comment>
<comment type="subcellular location">
    <subcellularLocation>
        <location>Secreted</location>
    </subcellularLocation>
</comment>
<comment type="tissue specificity">
    <text>Expressed by the venom gland.</text>
</comment>
<comment type="domain">
    <text evidence="1">The presence of a 'disulfide through disulfide knot' structurally defines this protein as a knottin.</text>
</comment>
<comment type="similarity">
    <text evidence="4">Belongs to the neurotoxin 14 (magi-1) family. 01 (HNTX-16) subfamily.</text>
</comment>
<keyword id="KW-0903">Direct protein sequencing</keyword>
<keyword id="KW-1015">Disulfide bond</keyword>
<keyword id="KW-0872">Ion channel impairing toxin</keyword>
<keyword id="KW-0960">Knottin</keyword>
<keyword id="KW-0964">Secreted</keyword>
<keyword id="KW-0732">Signal</keyword>
<keyword id="KW-0800">Toxin</keyword>
<reference key="1">
    <citation type="journal article" date="2010" name="J. Proteome Res.">
        <title>Molecular diversification of peptide toxins from the tarantula Haplopelma hainanum (Ornithoctonus hainana) venom based on transcriptomic, peptidomic, and genomic analyses.</title>
        <authorList>
            <person name="Tang X."/>
            <person name="Zhang Y."/>
            <person name="Hu W."/>
            <person name="Xu D."/>
            <person name="Tao H."/>
            <person name="Yang X."/>
            <person name="Li Y."/>
            <person name="Jiang L."/>
            <person name="Liang S."/>
        </authorList>
    </citation>
    <scope>NUCLEOTIDE SEQUENCE [LARGE SCALE MRNA]</scope>
    <scope>PROTEIN SEQUENCE OF 75-113</scope>
    <scope>IDENTIFICATION BY MASS SPECTROMETRY</scope>
    <source>
        <tissue>Venom</tissue>
        <tissue>Venom gland</tissue>
    </source>
</reference>
<feature type="signal peptide" evidence="2">
    <location>
        <begin position="1"/>
        <end position="21"/>
    </location>
</feature>
<feature type="propeptide" id="PRO_0000400871" evidence="3">
    <location>
        <begin position="22"/>
        <end position="74"/>
    </location>
</feature>
<feature type="peptide" id="PRO_0000400872" description="U11-theraphotoxin-Hhn1a">
    <location>
        <begin position="75"/>
        <end position="113"/>
    </location>
</feature>
<feature type="disulfide bond" evidence="1">
    <location>
        <begin position="75"/>
        <end position="90"/>
    </location>
</feature>
<feature type="disulfide bond" evidence="1">
    <location>
        <begin position="82"/>
        <end position="95"/>
    </location>
</feature>
<feature type="disulfide bond" evidence="1">
    <location>
        <begin position="89"/>
        <end position="110"/>
    </location>
</feature>
<protein>
    <recommendedName>
        <fullName>U11-theraphotoxin-Hhn1a</fullName>
        <shortName>U11-TRTX-Hhn1a</shortName>
    </recommendedName>
    <alternativeName>
        <fullName>Hainantoxin-XVI.8</fullName>
        <shortName>HNTX-XVI.8</shortName>
    </alternativeName>
    <alternativeName>
        <fullName>Peptide F4-19.87</fullName>
    </alternativeName>
</protein>
<name>H16A8_CYRHA</name>
<organism>
    <name type="scientific">Cyriopagopus hainanus</name>
    <name type="common">Chinese bird spider</name>
    <name type="synonym">Haplopelma hainanum</name>
    <dbReference type="NCBI Taxonomy" id="209901"/>
    <lineage>
        <taxon>Eukaryota</taxon>
        <taxon>Metazoa</taxon>
        <taxon>Ecdysozoa</taxon>
        <taxon>Arthropoda</taxon>
        <taxon>Chelicerata</taxon>
        <taxon>Arachnida</taxon>
        <taxon>Araneae</taxon>
        <taxon>Mygalomorphae</taxon>
        <taxon>Theraphosidae</taxon>
        <taxon>Haplopelma</taxon>
    </lineage>
</organism>
<accession>D2Y260</accession>
<evidence type="ECO:0000250" key="1"/>
<evidence type="ECO:0000255" key="2"/>
<evidence type="ECO:0000269" key="3">
    <source>
    </source>
</evidence>
<evidence type="ECO:0000305" key="4"/>
<dbReference type="EMBL" id="GU292937">
    <property type="protein sequence ID" value="ADB56753.1"/>
    <property type="molecule type" value="mRNA"/>
</dbReference>
<dbReference type="ArachnoServer" id="AS001592">
    <property type="toxin name" value="U11-theraphotoxin-Hhn1a"/>
</dbReference>
<dbReference type="GO" id="GO:0005576">
    <property type="term" value="C:extracellular region"/>
    <property type="evidence" value="ECO:0007669"/>
    <property type="project" value="UniProtKB-SubCell"/>
</dbReference>
<dbReference type="GO" id="GO:0019871">
    <property type="term" value="F:sodium channel inhibitor activity"/>
    <property type="evidence" value="ECO:0007669"/>
    <property type="project" value="InterPro"/>
</dbReference>
<dbReference type="GO" id="GO:0090729">
    <property type="term" value="F:toxin activity"/>
    <property type="evidence" value="ECO:0007669"/>
    <property type="project" value="UniProtKB-KW"/>
</dbReference>
<dbReference type="InterPro" id="IPR012627">
    <property type="entry name" value="Toxin_22"/>
</dbReference>
<dbReference type="Pfam" id="PF08092">
    <property type="entry name" value="Toxin_22"/>
    <property type="match status" value="1"/>
</dbReference>
<proteinExistence type="evidence at protein level"/>
<sequence length="113" mass="13088">MNTVRVTFLLVFVLAVSLGQADKDENRMEMQKKTEQGKSYLDFAENLLLQKLEELEAKLLEEDSEESRNSRQKRCIGEGVPCDENDPRCCSGLVCLKPTLHGIWYKSYYCYKK</sequence>